<sequence>MTEHNEDPQIERVADDAADEEAVTEPLATESKDEPAEHPEFEGPRRRARRERAERRAAQARATAIEQARRAAKRRARGQIVSEQNPAKPAARGVVRGLKALLATVVLAVVGIGLGLALYFTPAMSAREIVIIGIGAVSREEVLDAARVRPATPLLQIDTQQVADRVATIRRVASARVQRQYPSALRITIVERVPVVVKDFSDGPHLFDRDGVDFATDPPPPALPYFDVDNPGPSDPTTKAALQVLTALHPEVASQVGRIAAPSVASITLTLADGRVVIWGTTDRCEEKAEKLAALLTQPGRTYDVSSPDLPTVK</sequence>
<protein>
    <recommendedName>
        <fullName evidence="1">Cell division protein FtsQ</fullName>
    </recommendedName>
</protein>
<proteinExistence type="inferred from homology"/>
<keyword id="KW-0131">Cell cycle</keyword>
<keyword id="KW-0132">Cell division</keyword>
<keyword id="KW-1003">Cell membrane</keyword>
<keyword id="KW-0472">Membrane</keyword>
<keyword id="KW-1185">Reference proteome</keyword>
<keyword id="KW-0812">Transmembrane</keyword>
<keyword id="KW-1133">Transmembrane helix</keyword>
<accession>P64169</accession>
<accession>A0A1R3Y0A9</accession>
<accession>O06226</accession>
<accession>X2BJV8</accession>
<evidence type="ECO:0000255" key="1">
    <source>
        <dbReference type="HAMAP-Rule" id="MF_00911"/>
    </source>
</evidence>
<evidence type="ECO:0000255" key="2">
    <source>
        <dbReference type="PROSITE-ProRule" id="PRU01115"/>
    </source>
</evidence>
<evidence type="ECO:0000256" key="3">
    <source>
        <dbReference type="SAM" id="MobiDB-lite"/>
    </source>
</evidence>
<gene>
    <name evidence="1" type="primary">ftsQ</name>
    <name type="ordered locus">BQ2027_MB2175C</name>
</gene>
<feature type="chain" id="PRO_0000160583" description="Cell division protein FtsQ">
    <location>
        <begin position="1"/>
        <end position="314"/>
    </location>
</feature>
<feature type="topological domain" description="Cytoplasmic" evidence="1">
    <location>
        <begin position="1"/>
        <end position="99"/>
    </location>
</feature>
<feature type="transmembrane region" description="Helical" evidence="1">
    <location>
        <begin position="100"/>
        <end position="120"/>
    </location>
</feature>
<feature type="topological domain" description="Extracellular" evidence="1">
    <location>
        <begin position="121"/>
        <end position="314"/>
    </location>
</feature>
<feature type="domain" description="POTRA" evidence="2">
    <location>
        <begin position="124"/>
        <end position="192"/>
    </location>
</feature>
<feature type="region of interest" description="Disordered" evidence="3">
    <location>
        <begin position="1"/>
        <end position="57"/>
    </location>
</feature>
<feature type="compositionally biased region" description="Basic and acidic residues" evidence="3">
    <location>
        <begin position="1"/>
        <end position="15"/>
    </location>
</feature>
<feature type="compositionally biased region" description="Basic and acidic residues" evidence="3">
    <location>
        <begin position="30"/>
        <end position="57"/>
    </location>
</feature>
<dbReference type="EMBL" id="LT708304">
    <property type="protein sequence ID" value="SIU00783.1"/>
    <property type="molecule type" value="Genomic_DNA"/>
</dbReference>
<dbReference type="RefSeq" id="NP_855824.1">
    <property type="nucleotide sequence ID" value="NC_002945.3"/>
</dbReference>
<dbReference type="RefSeq" id="WP_003411157.1">
    <property type="nucleotide sequence ID" value="NC_002945.4"/>
</dbReference>
<dbReference type="SMR" id="P64169"/>
<dbReference type="KEGG" id="mbo:BQ2027_MB2175C"/>
<dbReference type="PATRIC" id="fig|233413.5.peg.2391"/>
<dbReference type="Proteomes" id="UP000001419">
    <property type="component" value="Chromosome"/>
</dbReference>
<dbReference type="GO" id="GO:0032153">
    <property type="term" value="C:cell division site"/>
    <property type="evidence" value="ECO:0007669"/>
    <property type="project" value="UniProtKB-UniRule"/>
</dbReference>
<dbReference type="GO" id="GO:0005886">
    <property type="term" value="C:plasma membrane"/>
    <property type="evidence" value="ECO:0007669"/>
    <property type="project" value="UniProtKB-SubCell"/>
</dbReference>
<dbReference type="GO" id="GO:0090529">
    <property type="term" value="P:cell septum assembly"/>
    <property type="evidence" value="ECO:0007669"/>
    <property type="project" value="InterPro"/>
</dbReference>
<dbReference type="GO" id="GO:0043093">
    <property type="term" value="P:FtsZ-dependent cytokinesis"/>
    <property type="evidence" value="ECO:0007669"/>
    <property type="project" value="UniProtKB-UniRule"/>
</dbReference>
<dbReference type="FunFam" id="3.10.20.310:FF:000021">
    <property type="entry name" value="Cell division protein FtsQ"/>
    <property type="match status" value="1"/>
</dbReference>
<dbReference type="Gene3D" id="3.10.20.310">
    <property type="entry name" value="membrane protein fhac"/>
    <property type="match status" value="1"/>
</dbReference>
<dbReference type="HAMAP" id="MF_00911">
    <property type="entry name" value="FtsQ_subfam"/>
    <property type="match status" value="1"/>
</dbReference>
<dbReference type="InterPro" id="IPR005548">
    <property type="entry name" value="Cell_div_FtsQ/DivIB_C"/>
</dbReference>
<dbReference type="InterPro" id="IPR026579">
    <property type="entry name" value="FtsQ"/>
</dbReference>
<dbReference type="InterPro" id="IPR050487">
    <property type="entry name" value="FtsQ_DivIB"/>
</dbReference>
<dbReference type="InterPro" id="IPR034746">
    <property type="entry name" value="POTRA"/>
</dbReference>
<dbReference type="InterPro" id="IPR013685">
    <property type="entry name" value="POTRA_FtsQ_type"/>
</dbReference>
<dbReference type="PANTHER" id="PTHR37820">
    <property type="entry name" value="CELL DIVISION PROTEIN DIVIB"/>
    <property type="match status" value="1"/>
</dbReference>
<dbReference type="PANTHER" id="PTHR37820:SF1">
    <property type="entry name" value="CELL DIVISION PROTEIN FTSQ"/>
    <property type="match status" value="1"/>
</dbReference>
<dbReference type="Pfam" id="PF03799">
    <property type="entry name" value="FtsQ_DivIB_C"/>
    <property type="match status" value="1"/>
</dbReference>
<dbReference type="Pfam" id="PF08478">
    <property type="entry name" value="POTRA_1"/>
    <property type="match status" value="1"/>
</dbReference>
<dbReference type="PROSITE" id="PS51779">
    <property type="entry name" value="POTRA"/>
    <property type="match status" value="1"/>
</dbReference>
<organism>
    <name type="scientific">Mycobacterium bovis (strain ATCC BAA-935 / AF2122/97)</name>
    <dbReference type="NCBI Taxonomy" id="233413"/>
    <lineage>
        <taxon>Bacteria</taxon>
        <taxon>Bacillati</taxon>
        <taxon>Actinomycetota</taxon>
        <taxon>Actinomycetes</taxon>
        <taxon>Mycobacteriales</taxon>
        <taxon>Mycobacteriaceae</taxon>
        <taxon>Mycobacterium</taxon>
        <taxon>Mycobacterium tuberculosis complex</taxon>
    </lineage>
</organism>
<reference key="1">
    <citation type="journal article" date="2003" name="Proc. Natl. Acad. Sci. U.S.A.">
        <title>The complete genome sequence of Mycobacterium bovis.</title>
        <authorList>
            <person name="Garnier T."/>
            <person name="Eiglmeier K."/>
            <person name="Camus J.-C."/>
            <person name="Medina N."/>
            <person name="Mansoor H."/>
            <person name="Pryor M."/>
            <person name="Duthoy S."/>
            <person name="Grondin S."/>
            <person name="Lacroix C."/>
            <person name="Monsempe C."/>
            <person name="Simon S."/>
            <person name="Harris B."/>
            <person name="Atkin R."/>
            <person name="Doggett J."/>
            <person name="Mayes R."/>
            <person name="Keating L."/>
            <person name="Wheeler P.R."/>
            <person name="Parkhill J."/>
            <person name="Barrell B.G."/>
            <person name="Cole S.T."/>
            <person name="Gordon S.V."/>
            <person name="Hewinson R.G."/>
        </authorList>
    </citation>
    <scope>NUCLEOTIDE SEQUENCE [LARGE SCALE GENOMIC DNA]</scope>
    <source>
        <strain>ATCC BAA-935 / AF2122/97</strain>
    </source>
</reference>
<reference key="2">
    <citation type="journal article" date="2017" name="Genome Announc.">
        <title>Updated reference genome sequence and annotation of Mycobacterium bovis AF2122/97.</title>
        <authorList>
            <person name="Malone K.M."/>
            <person name="Farrell D."/>
            <person name="Stuber T.P."/>
            <person name="Schubert O.T."/>
            <person name="Aebersold R."/>
            <person name="Robbe-Austerman S."/>
            <person name="Gordon S.V."/>
        </authorList>
    </citation>
    <scope>NUCLEOTIDE SEQUENCE [LARGE SCALE GENOMIC DNA]</scope>
    <scope>GENOME REANNOTATION</scope>
    <source>
        <strain>ATCC BAA-935 / AF2122/97</strain>
    </source>
</reference>
<name>FTSQ_MYCBO</name>
<comment type="function">
    <text evidence="1">Essential cell division protein.</text>
</comment>
<comment type="subcellular location">
    <subcellularLocation>
        <location evidence="1">Cell membrane</location>
        <topology evidence="1">Single-pass type II membrane protein</topology>
    </subcellularLocation>
    <text evidence="1">Localizes to the division septum.</text>
</comment>
<comment type="similarity">
    <text evidence="1">Belongs to the FtsQ/DivIB family. FtsQ subfamily.</text>
</comment>